<sequence length="417" mass="45339">MLKRDMNIADYDAELWHAMEQEVVRQEEHIELIASENYTSPRVMQAQGSQLTNKYAEGYPGKRYYGGCEYVDVVEQLAIDRAKALFGADYANVQPHSGSQANFAVYTTLLQPGDTVLGMNLAHGGHLTHGSPVNFSGKLYNIVPYGIDESGHIDYDQLAELAKTHQPKMIIGGFSAYSGVVDWARMRQIADSIGAYLFVDMAHVAGLIAAGVYPNPVPHAHVVTTTTHKTLAGPRGGLILAKGGSEELYKKLNSAVFPGAQGGPLMHVIAAKAVALKEAMEPAFKTYQQQVAKNAKAMVEVFLSRGFNVVSGATDNHLFLLDLVDKNLTGKEADAALGRANITVNKNSVPNDPKSPFVTSGMRIGTPAVTRRGFTEADVRDLAGWMCDVLENIHDDAVIERTKNKVLDICDRHPVYA</sequence>
<keyword id="KW-0028">Amino-acid biosynthesis</keyword>
<keyword id="KW-0963">Cytoplasm</keyword>
<keyword id="KW-0554">One-carbon metabolism</keyword>
<keyword id="KW-0663">Pyridoxal phosphate</keyword>
<keyword id="KW-0808">Transferase</keyword>
<gene>
    <name evidence="1" type="primary">glyA</name>
    <name type="ordered locus">SG1775</name>
</gene>
<name>GLYA_SODGM</name>
<comment type="function">
    <text evidence="1">Catalyzes the reversible interconversion of serine and glycine with tetrahydrofolate (THF) serving as the one-carbon carrier. This reaction serves as the major source of one-carbon groups required for the biosynthesis of purines, thymidylate, methionine, and other important biomolecules. Also exhibits THF-independent aldolase activity toward beta-hydroxyamino acids, producing glycine and aldehydes, via a retro-aldol mechanism.</text>
</comment>
<comment type="catalytic activity">
    <reaction evidence="1">
        <text>(6R)-5,10-methylene-5,6,7,8-tetrahydrofolate + glycine + H2O = (6S)-5,6,7,8-tetrahydrofolate + L-serine</text>
        <dbReference type="Rhea" id="RHEA:15481"/>
        <dbReference type="ChEBI" id="CHEBI:15377"/>
        <dbReference type="ChEBI" id="CHEBI:15636"/>
        <dbReference type="ChEBI" id="CHEBI:33384"/>
        <dbReference type="ChEBI" id="CHEBI:57305"/>
        <dbReference type="ChEBI" id="CHEBI:57453"/>
        <dbReference type="EC" id="2.1.2.1"/>
    </reaction>
</comment>
<comment type="cofactor">
    <cofactor evidence="1">
        <name>pyridoxal 5'-phosphate</name>
        <dbReference type="ChEBI" id="CHEBI:597326"/>
    </cofactor>
</comment>
<comment type="pathway">
    <text evidence="1">One-carbon metabolism; tetrahydrofolate interconversion.</text>
</comment>
<comment type="pathway">
    <text evidence="1">Amino-acid biosynthesis; glycine biosynthesis; glycine from L-serine: step 1/1.</text>
</comment>
<comment type="subunit">
    <text evidence="1">Homodimer.</text>
</comment>
<comment type="subcellular location">
    <subcellularLocation>
        <location evidence="1">Cytoplasm</location>
    </subcellularLocation>
</comment>
<comment type="similarity">
    <text evidence="1">Belongs to the SHMT family.</text>
</comment>
<protein>
    <recommendedName>
        <fullName evidence="1">Serine hydroxymethyltransferase</fullName>
        <shortName evidence="1">SHMT</shortName>
        <shortName evidence="1">Serine methylase</shortName>
        <ecNumber evidence="1">2.1.2.1</ecNumber>
    </recommendedName>
</protein>
<feature type="chain" id="PRO_0000235025" description="Serine hydroxymethyltransferase">
    <location>
        <begin position="1"/>
        <end position="417"/>
    </location>
</feature>
<feature type="binding site" evidence="1">
    <location>
        <position position="121"/>
    </location>
    <ligand>
        <name>(6S)-5,6,7,8-tetrahydrofolate</name>
        <dbReference type="ChEBI" id="CHEBI:57453"/>
    </ligand>
</feature>
<feature type="binding site" evidence="1">
    <location>
        <begin position="125"/>
        <end position="127"/>
    </location>
    <ligand>
        <name>(6S)-5,6,7,8-tetrahydrofolate</name>
        <dbReference type="ChEBI" id="CHEBI:57453"/>
    </ligand>
</feature>
<feature type="binding site" evidence="1">
    <location>
        <begin position="355"/>
        <end position="357"/>
    </location>
    <ligand>
        <name>(6S)-5,6,7,8-tetrahydrofolate</name>
        <dbReference type="ChEBI" id="CHEBI:57453"/>
    </ligand>
</feature>
<feature type="site" description="Plays an important role in substrate specificity" evidence="1">
    <location>
        <position position="228"/>
    </location>
</feature>
<feature type="modified residue" description="N6-(pyridoxal phosphate)lysine" evidence="1">
    <location>
        <position position="229"/>
    </location>
</feature>
<organism>
    <name type="scientific">Sodalis glossinidius (strain morsitans)</name>
    <dbReference type="NCBI Taxonomy" id="343509"/>
    <lineage>
        <taxon>Bacteria</taxon>
        <taxon>Pseudomonadati</taxon>
        <taxon>Pseudomonadota</taxon>
        <taxon>Gammaproteobacteria</taxon>
        <taxon>Enterobacterales</taxon>
        <taxon>Bruguierivoracaceae</taxon>
        <taxon>Sodalis</taxon>
    </lineage>
</organism>
<dbReference type="EC" id="2.1.2.1" evidence="1"/>
<dbReference type="EMBL" id="AP008232">
    <property type="protein sequence ID" value="BAE75050.1"/>
    <property type="molecule type" value="Genomic_DNA"/>
</dbReference>
<dbReference type="RefSeq" id="WP_011411599.1">
    <property type="nucleotide sequence ID" value="NC_007712.1"/>
</dbReference>
<dbReference type="SMR" id="Q2NS25"/>
<dbReference type="STRING" id="343509.SG1775"/>
<dbReference type="KEGG" id="sgl:SG1775"/>
<dbReference type="eggNOG" id="COG0112">
    <property type="taxonomic scope" value="Bacteria"/>
</dbReference>
<dbReference type="HOGENOM" id="CLU_022477_2_1_6"/>
<dbReference type="OrthoDB" id="9803846at2"/>
<dbReference type="BioCyc" id="SGLO343509:SGP1_RS16120-MONOMER"/>
<dbReference type="UniPathway" id="UPA00193"/>
<dbReference type="UniPathway" id="UPA00288">
    <property type="reaction ID" value="UER01023"/>
</dbReference>
<dbReference type="Proteomes" id="UP000001932">
    <property type="component" value="Chromosome"/>
</dbReference>
<dbReference type="GO" id="GO:0005829">
    <property type="term" value="C:cytosol"/>
    <property type="evidence" value="ECO:0007669"/>
    <property type="project" value="TreeGrafter"/>
</dbReference>
<dbReference type="GO" id="GO:0004372">
    <property type="term" value="F:glycine hydroxymethyltransferase activity"/>
    <property type="evidence" value="ECO:0007669"/>
    <property type="project" value="UniProtKB-UniRule"/>
</dbReference>
<dbReference type="GO" id="GO:0030170">
    <property type="term" value="F:pyridoxal phosphate binding"/>
    <property type="evidence" value="ECO:0007669"/>
    <property type="project" value="UniProtKB-UniRule"/>
</dbReference>
<dbReference type="GO" id="GO:0019264">
    <property type="term" value="P:glycine biosynthetic process from serine"/>
    <property type="evidence" value="ECO:0007669"/>
    <property type="project" value="UniProtKB-UniRule"/>
</dbReference>
<dbReference type="GO" id="GO:0035999">
    <property type="term" value="P:tetrahydrofolate interconversion"/>
    <property type="evidence" value="ECO:0007669"/>
    <property type="project" value="UniProtKB-UniRule"/>
</dbReference>
<dbReference type="CDD" id="cd00378">
    <property type="entry name" value="SHMT"/>
    <property type="match status" value="1"/>
</dbReference>
<dbReference type="FunFam" id="3.40.640.10:FF:000001">
    <property type="entry name" value="Serine hydroxymethyltransferase"/>
    <property type="match status" value="1"/>
</dbReference>
<dbReference type="FunFam" id="3.90.1150.10:FF:000003">
    <property type="entry name" value="Serine hydroxymethyltransferase"/>
    <property type="match status" value="1"/>
</dbReference>
<dbReference type="Gene3D" id="3.90.1150.10">
    <property type="entry name" value="Aspartate Aminotransferase, domain 1"/>
    <property type="match status" value="1"/>
</dbReference>
<dbReference type="Gene3D" id="3.40.640.10">
    <property type="entry name" value="Type I PLP-dependent aspartate aminotransferase-like (Major domain)"/>
    <property type="match status" value="1"/>
</dbReference>
<dbReference type="HAMAP" id="MF_00051">
    <property type="entry name" value="SHMT"/>
    <property type="match status" value="1"/>
</dbReference>
<dbReference type="InterPro" id="IPR015424">
    <property type="entry name" value="PyrdxlP-dep_Trfase"/>
</dbReference>
<dbReference type="InterPro" id="IPR015421">
    <property type="entry name" value="PyrdxlP-dep_Trfase_major"/>
</dbReference>
<dbReference type="InterPro" id="IPR015422">
    <property type="entry name" value="PyrdxlP-dep_Trfase_small"/>
</dbReference>
<dbReference type="InterPro" id="IPR001085">
    <property type="entry name" value="Ser_HO-MeTrfase"/>
</dbReference>
<dbReference type="InterPro" id="IPR049943">
    <property type="entry name" value="Ser_HO-MeTrfase-like"/>
</dbReference>
<dbReference type="InterPro" id="IPR019798">
    <property type="entry name" value="Ser_HO-MeTrfase_PLP_BS"/>
</dbReference>
<dbReference type="InterPro" id="IPR039429">
    <property type="entry name" value="SHMT-like_dom"/>
</dbReference>
<dbReference type="NCBIfam" id="NF000586">
    <property type="entry name" value="PRK00011.1"/>
    <property type="match status" value="1"/>
</dbReference>
<dbReference type="PANTHER" id="PTHR11680">
    <property type="entry name" value="SERINE HYDROXYMETHYLTRANSFERASE"/>
    <property type="match status" value="1"/>
</dbReference>
<dbReference type="PANTHER" id="PTHR11680:SF50">
    <property type="entry name" value="SERINE HYDROXYMETHYLTRANSFERASE"/>
    <property type="match status" value="1"/>
</dbReference>
<dbReference type="Pfam" id="PF00464">
    <property type="entry name" value="SHMT"/>
    <property type="match status" value="1"/>
</dbReference>
<dbReference type="PIRSF" id="PIRSF000412">
    <property type="entry name" value="SHMT"/>
    <property type="match status" value="1"/>
</dbReference>
<dbReference type="SUPFAM" id="SSF53383">
    <property type="entry name" value="PLP-dependent transferases"/>
    <property type="match status" value="1"/>
</dbReference>
<dbReference type="PROSITE" id="PS00096">
    <property type="entry name" value="SHMT"/>
    <property type="match status" value="1"/>
</dbReference>
<proteinExistence type="inferred from homology"/>
<evidence type="ECO:0000255" key="1">
    <source>
        <dbReference type="HAMAP-Rule" id="MF_00051"/>
    </source>
</evidence>
<reference key="1">
    <citation type="journal article" date="2006" name="Genome Res.">
        <title>Massive genome erosion and functional adaptations provide insights into the symbiotic lifestyle of Sodalis glossinidius in the tsetse host.</title>
        <authorList>
            <person name="Toh H."/>
            <person name="Weiss B.L."/>
            <person name="Perkin S.A.H."/>
            <person name="Yamashita A."/>
            <person name="Oshima K."/>
            <person name="Hattori M."/>
            <person name="Aksoy S."/>
        </authorList>
    </citation>
    <scope>NUCLEOTIDE SEQUENCE [LARGE SCALE GENOMIC DNA]</scope>
    <source>
        <strain>morsitans</strain>
    </source>
</reference>
<accession>Q2NS25</accession>